<feature type="chain" id="PRO_1000095933" description="N-(5'-phosphoribosyl)anthranilate isomerase">
    <location>
        <begin position="1"/>
        <end position="233"/>
    </location>
</feature>
<comment type="catalytic activity">
    <reaction evidence="1">
        <text>N-(5-phospho-beta-D-ribosyl)anthranilate = 1-(2-carboxyphenylamino)-1-deoxy-D-ribulose 5-phosphate</text>
        <dbReference type="Rhea" id="RHEA:21540"/>
        <dbReference type="ChEBI" id="CHEBI:18277"/>
        <dbReference type="ChEBI" id="CHEBI:58613"/>
        <dbReference type="EC" id="5.3.1.24"/>
    </reaction>
</comment>
<comment type="pathway">
    <text evidence="1">Amino-acid biosynthesis; L-tryptophan biosynthesis; L-tryptophan from chorismate: step 3/5.</text>
</comment>
<comment type="similarity">
    <text evidence="1">Belongs to the TrpF family.</text>
</comment>
<sequence>MPLHRTRIKLCGLTQPADVDHAVAIGADAIGLVFYPPSPRYVAIERAAELAHRAGPFVTVTGLFVNASADDVARVLDQVPLTLLQFHGDEPAELCAEIAGKVGLPWLRALRVQPGADLVEFADRFATAQGLLLDAFVEGYGGGGHVFDWTLIPPQWLPQSPSLPTTSAAPRLVLSGGLSAQNVAGAIERVRPYAVDVSSGIEAARGVKDHARMTAFVRAVREADAALGASVQA</sequence>
<name>TRPF_RALPJ</name>
<organism>
    <name type="scientific">Ralstonia pickettii (strain 12J)</name>
    <dbReference type="NCBI Taxonomy" id="402626"/>
    <lineage>
        <taxon>Bacteria</taxon>
        <taxon>Pseudomonadati</taxon>
        <taxon>Pseudomonadota</taxon>
        <taxon>Betaproteobacteria</taxon>
        <taxon>Burkholderiales</taxon>
        <taxon>Burkholderiaceae</taxon>
        <taxon>Ralstonia</taxon>
    </lineage>
</organism>
<accession>B2U6Z0</accession>
<gene>
    <name evidence="1" type="primary">trpF</name>
    <name type="ordered locus">Rpic_2138</name>
</gene>
<dbReference type="EC" id="5.3.1.24" evidence="1"/>
<dbReference type="EMBL" id="CP001068">
    <property type="protein sequence ID" value="ACD27272.1"/>
    <property type="molecule type" value="Genomic_DNA"/>
</dbReference>
<dbReference type="SMR" id="B2U6Z0"/>
<dbReference type="STRING" id="402626.Rpic_2138"/>
<dbReference type="KEGG" id="rpi:Rpic_2138"/>
<dbReference type="PATRIC" id="fig|402626.5.peg.3286"/>
<dbReference type="eggNOG" id="COG0135">
    <property type="taxonomic scope" value="Bacteria"/>
</dbReference>
<dbReference type="HOGENOM" id="CLU_076364_2_0_4"/>
<dbReference type="UniPathway" id="UPA00035">
    <property type="reaction ID" value="UER00042"/>
</dbReference>
<dbReference type="GO" id="GO:0004640">
    <property type="term" value="F:phosphoribosylanthranilate isomerase activity"/>
    <property type="evidence" value="ECO:0007669"/>
    <property type="project" value="UniProtKB-UniRule"/>
</dbReference>
<dbReference type="GO" id="GO:0000162">
    <property type="term" value="P:L-tryptophan biosynthetic process"/>
    <property type="evidence" value="ECO:0007669"/>
    <property type="project" value="UniProtKB-UniRule"/>
</dbReference>
<dbReference type="CDD" id="cd00405">
    <property type="entry name" value="PRAI"/>
    <property type="match status" value="1"/>
</dbReference>
<dbReference type="Gene3D" id="3.20.20.70">
    <property type="entry name" value="Aldolase class I"/>
    <property type="match status" value="1"/>
</dbReference>
<dbReference type="HAMAP" id="MF_00135">
    <property type="entry name" value="PRAI"/>
    <property type="match status" value="1"/>
</dbReference>
<dbReference type="InterPro" id="IPR013785">
    <property type="entry name" value="Aldolase_TIM"/>
</dbReference>
<dbReference type="InterPro" id="IPR001240">
    <property type="entry name" value="PRAI_dom"/>
</dbReference>
<dbReference type="InterPro" id="IPR011060">
    <property type="entry name" value="RibuloseP-bd_barrel"/>
</dbReference>
<dbReference type="InterPro" id="IPR044643">
    <property type="entry name" value="TrpF_fam"/>
</dbReference>
<dbReference type="NCBIfam" id="NF002298">
    <property type="entry name" value="PRK01222.1-4"/>
    <property type="match status" value="1"/>
</dbReference>
<dbReference type="NCBIfam" id="NF002299">
    <property type="entry name" value="PRK01222.1-6"/>
    <property type="match status" value="1"/>
</dbReference>
<dbReference type="PANTHER" id="PTHR42894">
    <property type="entry name" value="N-(5'-PHOSPHORIBOSYL)ANTHRANILATE ISOMERASE"/>
    <property type="match status" value="1"/>
</dbReference>
<dbReference type="PANTHER" id="PTHR42894:SF1">
    <property type="entry name" value="N-(5'-PHOSPHORIBOSYL)ANTHRANILATE ISOMERASE"/>
    <property type="match status" value="1"/>
</dbReference>
<dbReference type="Pfam" id="PF00697">
    <property type="entry name" value="PRAI"/>
    <property type="match status" value="1"/>
</dbReference>
<dbReference type="SUPFAM" id="SSF51366">
    <property type="entry name" value="Ribulose-phoshate binding barrel"/>
    <property type="match status" value="1"/>
</dbReference>
<evidence type="ECO:0000255" key="1">
    <source>
        <dbReference type="HAMAP-Rule" id="MF_00135"/>
    </source>
</evidence>
<proteinExistence type="inferred from homology"/>
<protein>
    <recommendedName>
        <fullName evidence="1">N-(5'-phosphoribosyl)anthranilate isomerase</fullName>
        <shortName evidence="1">PRAI</shortName>
        <ecNumber evidence="1">5.3.1.24</ecNumber>
    </recommendedName>
</protein>
<reference key="1">
    <citation type="submission" date="2008-05" db="EMBL/GenBank/DDBJ databases">
        <title>Complete sequence of chromosome 1 of Ralstonia pickettii 12J.</title>
        <authorList>
            <person name="Lucas S."/>
            <person name="Copeland A."/>
            <person name="Lapidus A."/>
            <person name="Glavina del Rio T."/>
            <person name="Dalin E."/>
            <person name="Tice H."/>
            <person name="Bruce D."/>
            <person name="Goodwin L."/>
            <person name="Pitluck S."/>
            <person name="Meincke L."/>
            <person name="Brettin T."/>
            <person name="Detter J.C."/>
            <person name="Han C."/>
            <person name="Kuske C.R."/>
            <person name="Schmutz J."/>
            <person name="Larimer F."/>
            <person name="Land M."/>
            <person name="Hauser L."/>
            <person name="Kyrpides N."/>
            <person name="Mikhailova N."/>
            <person name="Marsh T."/>
            <person name="Richardson P."/>
        </authorList>
    </citation>
    <scope>NUCLEOTIDE SEQUENCE [LARGE SCALE GENOMIC DNA]</scope>
    <source>
        <strain>12J</strain>
    </source>
</reference>
<keyword id="KW-0028">Amino-acid biosynthesis</keyword>
<keyword id="KW-0057">Aromatic amino acid biosynthesis</keyword>
<keyword id="KW-0413">Isomerase</keyword>
<keyword id="KW-0822">Tryptophan biosynthesis</keyword>